<keyword id="KW-0168">Coated pit</keyword>
<keyword id="KW-0472">Membrane</keyword>
<keyword id="KW-1185">Reference proteome</keyword>
<reference key="1">
    <citation type="journal article" date="2005" name="Nature">
        <title>The genome of the social amoeba Dictyostelium discoideum.</title>
        <authorList>
            <person name="Eichinger L."/>
            <person name="Pachebat J.A."/>
            <person name="Gloeckner G."/>
            <person name="Rajandream M.A."/>
            <person name="Sucgang R."/>
            <person name="Berriman M."/>
            <person name="Song J."/>
            <person name="Olsen R."/>
            <person name="Szafranski K."/>
            <person name="Xu Q."/>
            <person name="Tunggal B."/>
            <person name="Kummerfeld S."/>
            <person name="Madera M."/>
            <person name="Konfortov B.A."/>
            <person name="Rivero F."/>
            <person name="Bankier A.T."/>
            <person name="Lehmann R."/>
            <person name="Hamlin N."/>
            <person name="Davies R."/>
            <person name="Gaudet P."/>
            <person name="Fey P."/>
            <person name="Pilcher K."/>
            <person name="Chen G."/>
            <person name="Saunders D."/>
            <person name="Sodergren E.J."/>
            <person name="Davis P."/>
            <person name="Kerhornou A."/>
            <person name="Nie X."/>
            <person name="Hall N."/>
            <person name="Anjard C."/>
            <person name="Hemphill L."/>
            <person name="Bason N."/>
            <person name="Farbrother P."/>
            <person name="Desany B."/>
            <person name="Just E."/>
            <person name="Morio T."/>
            <person name="Rost R."/>
            <person name="Churcher C.M."/>
            <person name="Cooper J."/>
            <person name="Haydock S."/>
            <person name="van Driessche N."/>
            <person name="Cronin A."/>
            <person name="Goodhead I."/>
            <person name="Muzny D.M."/>
            <person name="Mourier T."/>
            <person name="Pain A."/>
            <person name="Lu M."/>
            <person name="Harper D."/>
            <person name="Lindsay R."/>
            <person name="Hauser H."/>
            <person name="James K.D."/>
            <person name="Quiles M."/>
            <person name="Madan Babu M."/>
            <person name="Saito T."/>
            <person name="Buchrieser C."/>
            <person name="Wardroper A."/>
            <person name="Felder M."/>
            <person name="Thangavelu M."/>
            <person name="Johnson D."/>
            <person name="Knights A."/>
            <person name="Loulseged H."/>
            <person name="Mungall K.L."/>
            <person name="Oliver K."/>
            <person name="Price C."/>
            <person name="Quail M.A."/>
            <person name="Urushihara H."/>
            <person name="Hernandez J."/>
            <person name="Rabbinowitsch E."/>
            <person name="Steffen D."/>
            <person name="Sanders M."/>
            <person name="Ma J."/>
            <person name="Kohara Y."/>
            <person name="Sharp S."/>
            <person name="Simmonds M.N."/>
            <person name="Spiegler S."/>
            <person name="Tivey A."/>
            <person name="Sugano S."/>
            <person name="White B."/>
            <person name="Walker D."/>
            <person name="Woodward J.R."/>
            <person name="Winckler T."/>
            <person name="Tanaka Y."/>
            <person name="Shaulsky G."/>
            <person name="Schleicher M."/>
            <person name="Weinstock G.M."/>
            <person name="Rosenthal A."/>
            <person name="Cox E.C."/>
            <person name="Chisholm R.L."/>
            <person name="Gibbs R.A."/>
            <person name="Loomis W.F."/>
            <person name="Platzer M."/>
            <person name="Kay R.R."/>
            <person name="Williams J.G."/>
            <person name="Dear P.H."/>
            <person name="Noegel A.A."/>
            <person name="Barrell B.G."/>
            <person name="Kuspa A."/>
        </authorList>
    </citation>
    <scope>NUCLEOTIDE SEQUENCE [LARGE SCALE GENOMIC DNA]</scope>
    <source>
        <strain>AX4</strain>
    </source>
</reference>
<reference key="2">
    <citation type="journal article" date="2008" name="J. Cell Sci.">
        <title>The ENTH and C-terminal domains of Dictyostelium epsin cooperate to regulate the dynamic interaction with clathrin-coated pits.</title>
        <authorList>
            <person name="Brady R.J."/>
            <person name="Wen Y."/>
            <person name="O'Halloran T.J."/>
        </authorList>
    </citation>
    <scope>FUNCTION</scope>
    <scope>DOMAIN</scope>
    <scope>SUBCELLULAR LOCATION</scope>
</reference>
<comment type="function">
    <text evidence="3">Binds to membranes enriched in phosphatidylinositol 4,5-bisphosphate (PtdIns(4,5)P2).</text>
</comment>
<comment type="subcellular location">
    <subcellularLocation>
        <location evidence="3">Membrane</location>
        <location evidence="3">Clathrin-coated pit</location>
    </subcellularLocation>
</comment>
<comment type="domain">
    <text evidence="3">The ENTH domain coordinates with the clathrin-binding C-terminal domain to allow a dynamic interaction of epsin with coated pits.</text>
</comment>
<comment type="similarity">
    <text evidence="4">Belongs to the epsin family.</text>
</comment>
<evidence type="ECO:0000255" key="1">
    <source>
        <dbReference type="PROSITE-ProRule" id="PRU00243"/>
    </source>
</evidence>
<evidence type="ECO:0000256" key="2">
    <source>
        <dbReference type="SAM" id="MobiDB-lite"/>
    </source>
</evidence>
<evidence type="ECO:0000269" key="3">
    <source>
    </source>
</evidence>
<evidence type="ECO:0000305" key="4"/>
<protein>
    <recommendedName>
        <fullName>Epsin</fullName>
    </recommendedName>
</protein>
<accession>Q54EH1</accession>
<gene>
    <name type="primary">epnA</name>
    <name type="ORF">DDB_G0291512</name>
</gene>
<feature type="chain" id="PRO_0000328494" description="Epsin">
    <location>
        <begin position="1"/>
        <end position="686"/>
    </location>
</feature>
<feature type="domain" description="ENTH" evidence="1">
    <location>
        <begin position="14"/>
        <end position="145"/>
    </location>
</feature>
<feature type="region of interest" description="Disordered" evidence="2">
    <location>
        <begin position="177"/>
        <end position="417"/>
    </location>
</feature>
<feature type="region of interest" description="Disordered" evidence="2">
    <location>
        <begin position="463"/>
        <end position="571"/>
    </location>
</feature>
<feature type="compositionally biased region" description="Polar residues" evidence="2">
    <location>
        <begin position="185"/>
        <end position="211"/>
    </location>
</feature>
<feature type="compositionally biased region" description="Basic and acidic residues" evidence="2">
    <location>
        <begin position="212"/>
        <end position="225"/>
    </location>
</feature>
<feature type="compositionally biased region" description="Polar residues" evidence="2">
    <location>
        <begin position="237"/>
        <end position="256"/>
    </location>
</feature>
<feature type="compositionally biased region" description="Low complexity" evidence="2">
    <location>
        <begin position="269"/>
        <end position="340"/>
    </location>
</feature>
<feature type="compositionally biased region" description="Low complexity" evidence="2">
    <location>
        <begin position="383"/>
        <end position="417"/>
    </location>
</feature>
<feature type="compositionally biased region" description="Polar residues" evidence="2">
    <location>
        <begin position="491"/>
        <end position="503"/>
    </location>
</feature>
<feature type="compositionally biased region" description="Basic and acidic residues" evidence="2">
    <location>
        <begin position="504"/>
        <end position="521"/>
    </location>
</feature>
<feature type="compositionally biased region" description="Low complexity" evidence="2">
    <location>
        <begin position="527"/>
        <end position="547"/>
    </location>
</feature>
<feature type="compositionally biased region" description="Polar residues" evidence="2">
    <location>
        <begin position="558"/>
        <end position="567"/>
    </location>
</feature>
<sequence length="686" mass="75837">METMIKSYIKKGKDAVLNTPEIERKVRDATSNDKWGPSGTQMQEISRASYNYECFPIIMGVIWKRINDPGKFWRHVYKSLLLIDYLVRNGSPQVIRDCRHHTMEIKTLVEFQYIEEEKDVGLSVRERAKQVIDLLQDDQRIKEERDKAKTNQNKYVGIGNDSRDFGYGGGSYGGGGYDSDSYGSNQRDSYGGNQRDSYGGNQRDSYGGNQRETTRRDSFNGRDEGYGNNNNNNNNNSYDSDPYSNTRAEYENYSNRAETRRNNEFGDDSNNSYNNNNNFNNNNNNNNSYNNSNNSNNSNNNNNNNNYNNSNNNSNNIQNNPNAASGGRSRPRAASGSGPSPATPNFQSSQQQQQPTLIDFSEPTPANKPMVFDPLADLASGMNNTNNNNNNNNNNSNSFGGFQSVNNNQNSFNFNNNNQQQQQQNNFLQLTQSNPQQSNNNNNNNNFFNQQPQQAQQFGQFQNSSMNKDPFAKDEFGDFAGANGNADFNPFDQQSGDFSNKNDGQQKPKDTNDPWSKKDLFDLSNLGNQNPNQSPVNNTNNNNNGNTRSQPARVANGPITSAGSTIPTMRPQPMMNQGFNGGMMNQGMGGFNQGGGMNNMNGMNQGGMNNMNGMNQGGMNQGGMGGFNQGGMNNMGGMNQGGMNNMGGMNNMGGMNSMNGMNQGGMGFNQSGANRNTNSMGSAGRF</sequence>
<proteinExistence type="inferred from homology"/>
<name>EPN_DICDI</name>
<dbReference type="EMBL" id="AAFI02000177">
    <property type="protein sequence ID" value="EAL61740.1"/>
    <property type="molecule type" value="Genomic_DNA"/>
</dbReference>
<dbReference type="RefSeq" id="XP_635269.1">
    <property type="nucleotide sequence ID" value="XM_630177.1"/>
</dbReference>
<dbReference type="SMR" id="Q54EH1"/>
<dbReference type="FunCoup" id="Q54EH1">
    <property type="interactions" value="575"/>
</dbReference>
<dbReference type="STRING" id="44689.Q54EH1"/>
<dbReference type="PaxDb" id="44689-DDB0266727"/>
<dbReference type="EnsemblProtists" id="EAL61740">
    <property type="protein sequence ID" value="EAL61740"/>
    <property type="gene ID" value="DDB_G0291512"/>
</dbReference>
<dbReference type="GeneID" id="8628213"/>
<dbReference type="KEGG" id="ddi:DDB_G0291512"/>
<dbReference type="dictyBase" id="DDB_G0291512">
    <property type="gene designation" value="epnA"/>
</dbReference>
<dbReference type="VEuPathDB" id="AmoebaDB:DDB_G0291512"/>
<dbReference type="eggNOG" id="KOG2056">
    <property type="taxonomic scope" value="Eukaryota"/>
</dbReference>
<dbReference type="HOGENOM" id="CLU_401399_0_0_1"/>
<dbReference type="InParanoid" id="Q54EH1"/>
<dbReference type="OMA" id="HHTMEIK"/>
<dbReference type="Reactome" id="R-DDI-8856825">
    <property type="pathway name" value="Cargo recognition for clathrin-mediated endocytosis"/>
</dbReference>
<dbReference type="PRO" id="PR:Q54EH1"/>
<dbReference type="Proteomes" id="UP000002195">
    <property type="component" value="Chromosome 6"/>
</dbReference>
<dbReference type="GO" id="GO:0030122">
    <property type="term" value="C:AP-2 adaptor complex"/>
    <property type="evidence" value="ECO:0000314"/>
    <property type="project" value="dictyBase"/>
</dbReference>
<dbReference type="GO" id="GO:0030125">
    <property type="term" value="C:clathrin vesicle coat"/>
    <property type="evidence" value="ECO:0000318"/>
    <property type="project" value="GO_Central"/>
</dbReference>
<dbReference type="GO" id="GO:0005905">
    <property type="term" value="C:clathrin-coated pit"/>
    <property type="evidence" value="ECO:0000314"/>
    <property type="project" value="dictyBase"/>
</dbReference>
<dbReference type="GO" id="GO:0030136">
    <property type="term" value="C:clathrin-coated vesicle"/>
    <property type="evidence" value="ECO:0000314"/>
    <property type="project" value="dictyBase"/>
</dbReference>
<dbReference type="GO" id="GO:0000331">
    <property type="term" value="C:contractile vacuole"/>
    <property type="evidence" value="ECO:0000314"/>
    <property type="project" value="dictyBase"/>
</dbReference>
<dbReference type="GO" id="GO:0005768">
    <property type="term" value="C:endosome"/>
    <property type="evidence" value="ECO:0000318"/>
    <property type="project" value="GO_Central"/>
</dbReference>
<dbReference type="GO" id="GO:0005886">
    <property type="term" value="C:plasma membrane"/>
    <property type="evidence" value="ECO:0000314"/>
    <property type="project" value="dictyBase"/>
</dbReference>
<dbReference type="GO" id="GO:0030276">
    <property type="term" value="F:clathrin binding"/>
    <property type="evidence" value="ECO:0000314"/>
    <property type="project" value="dictyBase"/>
</dbReference>
<dbReference type="GO" id="GO:0005546">
    <property type="term" value="F:phosphatidylinositol-4,5-bisphosphate binding"/>
    <property type="evidence" value="ECO:0000314"/>
    <property type="project" value="dictyBase"/>
</dbReference>
<dbReference type="GO" id="GO:0005543">
    <property type="term" value="F:phospholipid binding"/>
    <property type="evidence" value="ECO:0000318"/>
    <property type="project" value="GO_Central"/>
</dbReference>
<dbReference type="GO" id="GO:0007015">
    <property type="term" value="P:actin filament organization"/>
    <property type="evidence" value="ECO:0000315"/>
    <property type="project" value="dictyBase"/>
</dbReference>
<dbReference type="GO" id="GO:0006897">
    <property type="term" value="P:endocytosis"/>
    <property type="evidence" value="ECO:0000318"/>
    <property type="project" value="GO_Central"/>
</dbReference>
<dbReference type="GO" id="GO:0000281">
    <property type="term" value="P:mitotic cytokinesis"/>
    <property type="evidence" value="ECO:0000315"/>
    <property type="project" value="dictyBase"/>
</dbReference>
<dbReference type="GO" id="GO:0072659">
    <property type="term" value="P:protein localization to plasma membrane"/>
    <property type="evidence" value="ECO:0000315"/>
    <property type="project" value="dictyBase"/>
</dbReference>
<dbReference type="GO" id="GO:0030435">
    <property type="term" value="P:sporulation resulting in formation of a cellular spore"/>
    <property type="evidence" value="ECO:0000315"/>
    <property type="project" value="dictyBase"/>
</dbReference>
<dbReference type="CDD" id="cd03571">
    <property type="entry name" value="ENTH"/>
    <property type="match status" value="1"/>
</dbReference>
<dbReference type="FunFam" id="1.25.40.90:FF:000006">
    <property type="entry name" value="Clathrin interactor 1"/>
    <property type="match status" value="1"/>
</dbReference>
<dbReference type="Gene3D" id="1.25.40.90">
    <property type="match status" value="1"/>
</dbReference>
<dbReference type="InterPro" id="IPR013809">
    <property type="entry name" value="ENTH"/>
</dbReference>
<dbReference type="InterPro" id="IPR008942">
    <property type="entry name" value="ENTH_VHS"/>
</dbReference>
<dbReference type="PANTHER" id="PTHR12276:SF45">
    <property type="entry name" value="CLATHRIN INTERACTOR 1"/>
    <property type="match status" value="1"/>
</dbReference>
<dbReference type="PANTHER" id="PTHR12276">
    <property type="entry name" value="EPSIN/ENT-RELATED"/>
    <property type="match status" value="1"/>
</dbReference>
<dbReference type="Pfam" id="PF01417">
    <property type="entry name" value="ENTH"/>
    <property type="match status" value="1"/>
</dbReference>
<dbReference type="SMART" id="SM00273">
    <property type="entry name" value="ENTH"/>
    <property type="match status" value="1"/>
</dbReference>
<dbReference type="SUPFAM" id="SSF48464">
    <property type="entry name" value="ENTH/VHS domain"/>
    <property type="match status" value="1"/>
</dbReference>
<dbReference type="PROSITE" id="PS50942">
    <property type="entry name" value="ENTH"/>
    <property type="match status" value="1"/>
</dbReference>
<organism>
    <name type="scientific">Dictyostelium discoideum</name>
    <name type="common">Social amoeba</name>
    <dbReference type="NCBI Taxonomy" id="44689"/>
    <lineage>
        <taxon>Eukaryota</taxon>
        <taxon>Amoebozoa</taxon>
        <taxon>Evosea</taxon>
        <taxon>Eumycetozoa</taxon>
        <taxon>Dictyostelia</taxon>
        <taxon>Dictyosteliales</taxon>
        <taxon>Dictyosteliaceae</taxon>
        <taxon>Dictyostelium</taxon>
    </lineage>
</organism>